<feature type="chain" id="PRO_0000239458" description="LIM domain only protein 3">
    <location>
        <begin position="1"/>
        <end position="145"/>
    </location>
</feature>
<feature type="domain" description="LIM zinc-binding 1" evidence="1">
    <location>
        <begin position="11"/>
        <end position="73"/>
    </location>
</feature>
<feature type="domain" description="LIM zinc-binding 2" evidence="1">
    <location>
        <begin position="75"/>
        <end position="137"/>
    </location>
</feature>
<name>LMO3_BOVIN</name>
<dbReference type="EMBL" id="BC112712">
    <property type="protein sequence ID" value="AAI12713.1"/>
    <property type="molecule type" value="mRNA"/>
</dbReference>
<dbReference type="RefSeq" id="NP_001039802.1">
    <property type="nucleotide sequence ID" value="NM_001046337.2"/>
</dbReference>
<dbReference type="RefSeq" id="XP_005207039.1">
    <property type="nucleotide sequence ID" value="XM_005206982.3"/>
</dbReference>
<dbReference type="RefSeq" id="XP_010803756.1">
    <property type="nucleotide sequence ID" value="XM_010805454.4"/>
</dbReference>
<dbReference type="RefSeq" id="XP_010803757.1">
    <property type="nucleotide sequence ID" value="XM_010805455.2"/>
</dbReference>
<dbReference type="RefSeq" id="XP_010803758.1">
    <property type="nucleotide sequence ID" value="XM_010805456.4"/>
</dbReference>
<dbReference type="RefSeq" id="XP_059742504.1">
    <property type="nucleotide sequence ID" value="XM_059886521.1"/>
</dbReference>
<dbReference type="SMR" id="Q2KIA3"/>
<dbReference type="FunCoup" id="Q2KIA3">
    <property type="interactions" value="347"/>
</dbReference>
<dbReference type="STRING" id="9913.ENSBTAP00000070366"/>
<dbReference type="PaxDb" id="9913-ENSBTAP00000040639"/>
<dbReference type="Ensembl" id="ENSBTAT00000043044.2">
    <property type="protein sequence ID" value="ENSBTAP00000040639.1"/>
    <property type="gene ID" value="ENSBTAG00000013541.6"/>
</dbReference>
<dbReference type="GeneID" id="532870"/>
<dbReference type="KEGG" id="bta:532870"/>
<dbReference type="CTD" id="55885"/>
<dbReference type="VEuPathDB" id="HostDB:ENSBTAG00000013541"/>
<dbReference type="VGNC" id="VGNC:30935">
    <property type="gene designation" value="LMO3"/>
</dbReference>
<dbReference type="eggNOG" id="KOG0490">
    <property type="taxonomic scope" value="Eukaryota"/>
</dbReference>
<dbReference type="GeneTree" id="ENSGT00940000153908"/>
<dbReference type="HOGENOM" id="CLU_001357_7_1_1"/>
<dbReference type="InParanoid" id="Q2KIA3"/>
<dbReference type="OrthoDB" id="6352355at2759"/>
<dbReference type="TreeFam" id="TF351071"/>
<dbReference type="Proteomes" id="UP000009136">
    <property type="component" value="Chromosome 5"/>
</dbReference>
<dbReference type="Bgee" id="ENSBTAG00000013541">
    <property type="expression patterns" value="Expressed in oocyte and 90 other cell types or tissues"/>
</dbReference>
<dbReference type="GO" id="GO:0005634">
    <property type="term" value="C:nucleus"/>
    <property type="evidence" value="ECO:0000318"/>
    <property type="project" value="GO_Central"/>
</dbReference>
<dbReference type="GO" id="GO:0140297">
    <property type="term" value="F:DNA-binding transcription factor binding"/>
    <property type="evidence" value="ECO:0000318"/>
    <property type="project" value="GO_Central"/>
</dbReference>
<dbReference type="GO" id="GO:0046872">
    <property type="term" value="F:metal ion binding"/>
    <property type="evidence" value="ECO:0007669"/>
    <property type="project" value="UniProtKB-KW"/>
</dbReference>
<dbReference type="GO" id="GO:0003713">
    <property type="term" value="F:transcription coactivator activity"/>
    <property type="evidence" value="ECO:0000318"/>
    <property type="project" value="GO_Central"/>
</dbReference>
<dbReference type="GO" id="GO:0045944">
    <property type="term" value="P:positive regulation of transcription by RNA polymerase II"/>
    <property type="evidence" value="ECO:0000318"/>
    <property type="project" value="GO_Central"/>
</dbReference>
<dbReference type="CDD" id="cd09388">
    <property type="entry name" value="LIM1_LMO1_LMO3"/>
    <property type="match status" value="1"/>
</dbReference>
<dbReference type="CDD" id="cd09389">
    <property type="entry name" value="LIM2_LMO1_LMO3"/>
    <property type="match status" value="1"/>
</dbReference>
<dbReference type="FunFam" id="2.10.110.10:FF:000015">
    <property type="entry name" value="LIM domain only 3"/>
    <property type="match status" value="1"/>
</dbReference>
<dbReference type="FunFam" id="2.10.110.10:FF:000016">
    <property type="entry name" value="LIM domain only 3"/>
    <property type="match status" value="1"/>
</dbReference>
<dbReference type="Gene3D" id="2.10.110.10">
    <property type="entry name" value="Cysteine Rich Protein"/>
    <property type="match status" value="2"/>
</dbReference>
<dbReference type="InterPro" id="IPR050945">
    <property type="entry name" value="LMO_RBTN_TF"/>
</dbReference>
<dbReference type="InterPro" id="IPR001781">
    <property type="entry name" value="Znf_LIM"/>
</dbReference>
<dbReference type="PANTHER" id="PTHR45787">
    <property type="entry name" value="LD11652P"/>
    <property type="match status" value="1"/>
</dbReference>
<dbReference type="PANTHER" id="PTHR45787:SF7">
    <property type="entry name" value="LIM DOMAIN ONLY PROTEIN 3"/>
    <property type="match status" value="1"/>
</dbReference>
<dbReference type="Pfam" id="PF00412">
    <property type="entry name" value="LIM"/>
    <property type="match status" value="2"/>
</dbReference>
<dbReference type="SMART" id="SM00132">
    <property type="entry name" value="LIM"/>
    <property type="match status" value="2"/>
</dbReference>
<dbReference type="SUPFAM" id="SSF57716">
    <property type="entry name" value="Glucocorticoid receptor-like (DNA-binding domain)"/>
    <property type="match status" value="3"/>
</dbReference>
<dbReference type="PROSITE" id="PS00478">
    <property type="entry name" value="LIM_DOMAIN_1"/>
    <property type="match status" value="2"/>
</dbReference>
<dbReference type="PROSITE" id="PS50023">
    <property type="entry name" value="LIM_DOMAIN_2"/>
    <property type="match status" value="2"/>
</dbReference>
<gene>
    <name type="primary">LMO3</name>
</gene>
<keyword id="KW-0440">LIM domain</keyword>
<keyword id="KW-0479">Metal-binding</keyword>
<keyword id="KW-1185">Reference proteome</keyword>
<keyword id="KW-0677">Repeat</keyword>
<keyword id="KW-0804">Transcription</keyword>
<keyword id="KW-0805">Transcription regulation</keyword>
<keyword id="KW-0862">Zinc</keyword>
<reference key="1">
    <citation type="submission" date="2006-01" db="EMBL/GenBank/DDBJ databases">
        <authorList>
            <consortium name="NIH - Mammalian Gene Collection (MGC) project"/>
        </authorList>
    </citation>
    <scope>NUCLEOTIDE SEQUENCE [LARGE SCALE MRNA]</scope>
    <source>
        <strain>Hereford</strain>
        <tissue>Hypothalamus</tissue>
    </source>
</reference>
<sequence length="145" mass="16594">MLSVQPDTKPKGCAGCNRKIKDRYLLKALDKYWHEDCLKCACCDCRLGEVGSTLYTKANLILCRRDYLRLFGVTGNCAACSKLIPAFEMVMRAKDNVYHLDCFACQLCNQRFCVGDKFFLKNNMILCQTDYEEGLMKEGYAPQVR</sequence>
<protein>
    <recommendedName>
        <fullName>LIM domain only protein 3</fullName>
        <shortName>LMO-3</shortName>
    </recommendedName>
</protein>
<proteinExistence type="evidence at transcript level"/>
<organism>
    <name type="scientific">Bos taurus</name>
    <name type="common">Bovine</name>
    <dbReference type="NCBI Taxonomy" id="9913"/>
    <lineage>
        <taxon>Eukaryota</taxon>
        <taxon>Metazoa</taxon>
        <taxon>Chordata</taxon>
        <taxon>Craniata</taxon>
        <taxon>Vertebrata</taxon>
        <taxon>Euteleostomi</taxon>
        <taxon>Mammalia</taxon>
        <taxon>Eutheria</taxon>
        <taxon>Laurasiatheria</taxon>
        <taxon>Artiodactyla</taxon>
        <taxon>Ruminantia</taxon>
        <taxon>Pecora</taxon>
        <taxon>Bovidae</taxon>
        <taxon>Bovinae</taxon>
        <taxon>Bos</taxon>
    </lineage>
</organism>
<evidence type="ECO:0000255" key="1">
    <source>
        <dbReference type="PROSITE-ProRule" id="PRU00125"/>
    </source>
</evidence>
<accession>Q2KIA3</accession>